<dbReference type="EMBL" id="U39840">
    <property type="protein sequence ID" value="AAB06493.1"/>
    <property type="molecule type" value="mRNA"/>
</dbReference>
<dbReference type="EMBL" id="AF176112">
    <property type="protein sequence ID" value="AAD51979.1"/>
    <property type="molecule type" value="Genomic_DNA"/>
</dbReference>
<dbReference type="EMBL" id="AF176111">
    <property type="protein sequence ID" value="AAD51979.1"/>
    <property type="status" value="JOINED"/>
    <property type="molecule type" value="Genomic_DNA"/>
</dbReference>
<dbReference type="EMBL" id="AF303743">
    <property type="protein sequence ID" value="AAG40847.1"/>
    <property type="molecule type" value="Genomic_DNA"/>
</dbReference>
<dbReference type="EMBL" id="AF303742">
    <property type="protein sequence ID" value="AAG40847.1"/>
    <property type="status" value="JOINED"/>
    <property type="molecule type" value="Genomic_DNA"/>
</dbReference>
<dbReference type="EMBL" id="AK313785">
    <property type="protein sequence ID" value="BAG36523.1"/>
    <property type="molecule type" value="mRNA"/>
</dbReference>
<dbReference type="EMBL" id="AK316360">
    <property type="protein sequence ID" value="BAH14731.1"/>
    <property type="molecule type" value="mRNA"/>
</dbReference>
<dbReference type="EMBL" id="AL121790">
    <property type="status" value="NOT_ANNOTATED_CDS"/>
    <property type="molecule type" value="Genomic_DNA"/>
</dbReference>
<dbReference type="EMBL" id="CH471078">
    <property type="protein sequence ID" value="EAW65844.1"/>
    <property type="molecule type" value="Genomic_DNA"/>
</dbReference>
<dbReference type="EMBL" id="BC033890">
    <property type="protein sequence ID" value="AAH33890.1"/>
    <property type="molecule type" value="mRNA"/>
</dbReference>
<dbReference type="CCDS" id="CCDS9665.1">
    <molecule id="P55317-1"/>
</dbReference>
<dbReference type="PIR" id="S70357">
    <property type="entry name" value="S70357"/>
</dbReference>
<dbReference type="RefSeq" id="NP_004487.2">
    <molecule id="P55317-1"/>
    <property type="nucleotide sequence ID" value="NM_004496.3"/>
</dbReference>
<dbReference type="RefSeq" id="XP_016876735.1">
    <property type="nucleotide sequence ID" value="XM_017021246.1"/>
</dbReference>
<dbReference type="PDB" id="7VOX">
    <property type="method" value="X-ray"/>
    <property type="resolution" value="2.10 A"/>
    <property type="chains" value="A/B/C/H=168-264"/>
</dbReference>
<dbReference type="PDB" id="8VFY">
    <property type="method" value="EM"/>
    <property type="resolution" value="2.89 A"/>
    <property type="chains" value="O=1-472"/>
</dbReference>
<dbReference type="PDB" id="8VFZ">
    <property type="method" value="EM"/>
    <property type="resolution" value="4.10 A"/>
    <property type="chains" value="O/P=1-472"/>
</dbReference>
<dbReference type="PDB" id="8VG1">
    <property type="method" value="EM"/>
    <property type="resolution" value="2.48 A"/>
    <property type="chains" value="O=1-472"/>
</dbReference>
<dbReference type="PDB" id="8VG2">
    <property type="method" value="EM"/>
    <property type="resolution" value="3.04 A"/>
    <property type="chains" value="O=1-472"/>
</dbReference>
<dbReference type="PDBsum" id="7VOX"/>
<dbReference type="PDBsum" id="8VFY"/>
<dbReference type="PDBsum" id="8VFZ"/>
<dbReference type="PDBsum" id="8VG1"/>
<dbReference type="PDBsum" id="8VG2"/>
<dbReference type="EMDB" id="EMD-43194"/>
<dbReference type="EMDB" id="EMD-43195"/>
<dbReference type="EMDB" id="EMD-43197"/>
<dbReference type="EMDB" id="EMD-43198"/>
<dbReference type="SMR" id="P55317"/>
<dbReference type="BioGRID" id="109411">
    <property type="interactions" value="523"/>
</dbReference>
<dbReference type="CORUM" id="P55317"/>
<dbReference type="DIP" id="DIP-57138N"/>
<dbReference type="ELM" id="P55317"/>
<dbReference type="FunCoup" id="P55317">
    <property type="interactions" value="4980"/>
</dbReference>
<dbReference type="IntAct" id="P55317">
    <property type="interactions" value="48"/>
</dbReference>
<dbReference type="MINT" id="P55317"/>
<dbReference type="STRING" id="9606.ENSP00000250448"/>
<dbReference type="GlyGen" id="P55317">
    <property type="glycosylation" value="13 sites, 1 O-linked glycan (9 sites)"/>
</dbReference>
<dbReference type="iPTMnet" id="P55317"/>
<dbReference type="PhosphoSitePlus" id="P55317"/>
<dbReference type="SwissPalm" id="P55317"/>
<dbReference type="BioMuta" id="FOXA1"/>
<dbReference type="DMDM" id="296434509"/>
<dbReference type="jPOST" id="P55317"/>
<dbReference type="MassIVE" id="P55317"/>
<dbReference type="PaxDb" id="9606-ENSP00000250448"/>
<dbReference type="PeptideAtlas" id="P55317"/>
<dbReference type="ProteomicsDB" id="56845">
    <molecule id="P55317-1"/>
</dbReference>
<dbReference type="ProteomicsDB" id="7076"/>
<dbReference type="Pumba" id="P55317"/>
<dbReference type="Antibodypedia" id="23304">
    <property type="antibodies" value="1512 antibodies from 43 providers"/>
</dbReference>
<dbReference type="DNASU" id="3169"/>
<dbReference type="Ensembl" id="ENST00000250448.5">
    <molecule id="P55317-1"/>
    <property type="protein sequence ID" value="ENSP00000250448.3"/>
    <property type="gene ID" value="ENSG00000129514.8"/>
</dbReference>
<dbReference type="GeneID" id="3169"/>
<dbReference type="KEGG" id="hsa:3169"/>
<dbReference type="MANE-Select" id="ENST00000250448.5">
    <property type="protein sequence ID" value="ENSP00000250448.3"/>
    <property type="RefSeq nucleotide sequence ID" value="NM_004496.5"/>
    <property type="RefSeq protein sequence ID" value="NP_004487.2"/>
</dbReference>
<dbReference type="UCSC" id="uc001wuf.5">
    <molecule id="P55317-1"/>
    <property type="organism name" value="human"/>
</dbReference>
<dbReference type="AGR" id="HGNC:5021"/>
<dbReference type="CTD" id="3169"/>
<dbReference type="DisGeNET" id="3169"/>
<dbReference type="GeneCards" id="FOXA1"/>
<dbReference type="HGNC" id="HGNC:5021">
    <property type="gene designation" value="FOXA1"/>
</dbReference>
<dbReference type="HPA" id="ENSG00000129514">
    <property type="expression patterns" value="Tissue enhanced (prostate, stomach)"/>
</dbReference>
<dbReference type="MalaCards" id="FOXA1"/>
<dbReference type="MIM" id="602294">
    <property type="type" value="gene"/>
</dbReference>
<dbReference type="neXtProt" id="NX_P55317"/>
<dbReference type="OpenTargets" id="ENSG00000129514"/>
<dbReference type="PharmGKB" id="PA201090"/>
<dbReference type="VEuPathDB" id="HostDB:ENSG00000129514"/>
<dbReference type="eggNOG" id="KOG3563">
    <property type="taxonomic scope" value="Eukaryota"/>
</dbReference>
<dbReference type="GeneTree" id="ENSGT00940000162043"/>
<dbReference type="HOGENOM" id="CLU_027910_4_1_1"/>
<dbReference type="InParanoid" id="P55317"/>
<dbReference type="OMA" id="WSSYYTD"/>
<dbReference type="OrthoDB" id="5954824at2759"/>
<dbReference type="PAN-GO" id="P55317">
    <property type="GO annotations" value="5 GO annotations based on evolutionary models"/>
</dbReference>
<dbReference type="PhylomeDB" id="P55317"/>
<dbReference type="TreeFam" id="TF316127"/>
<dbReference type="PathwayCommons" id="P55317"/>
<dbReference type="Reactome" id="R-HSA-9018519">
    <property type="pathway name" value="Estrogen-dependent gene expression"/>
</dbReference>
<dbReference type="Reactome" id="R-HSA-9796292">
    <property type="pathway name" value="Formation of axial mesoderm"/>
</dbReference>
<dbReference type="SignaLink" id="P55317"/>
<dbReference type="SIGNOR" id="P55317"/>
<dbReference type="BioGRID-ORCS" id="3169">
    <property type="hits" value="64 hits in 1194 CRISPR screens"/>
</dbReference>
<dbReference type="ChiTaRS" id="FOXA1">
    <property type="organism name" value="human"/>
</dbReference>
<dbReference type="GeneWiki" id="FOXA1"/>
<dbReference type="GenomeRNAi" id="3169"/>
<dbReference type="Pharos" id="P55317">
    <property type="development level" value="Tbio"/>
</dbReference>
<dbReference type="PRO" id="PR:P55317"/>
<dbReference type="Proteomes" id="UP000005640">
    <property type="component" value="Chromosome 14"/>
</dbReference>
<dbReference type="RNAct" id="P55317">
    <property type="molecule type" value="protein"/>
</dbReference>
<dbReference type="Bgee" id="ENSG00000129514">
    <property type="expression patterns" value="Expressed in endometrium epithelium and 106 other cell types or tissues"/>
</dbReference>
<dbReference type="ExpressionAtlas" id="P55317">
    <property type="expression patterns" value="baseline and differential"/>
</dbReference>
<dbReference type="GO" id="GO:0000785">
    <property type="term" value="C:chromatin"/>
    <property type="evidence" value="ECO:0000247"/>
    <property type="project" value="NTNU_SB"/>
</dbReference>
<dbReference type="GO" id="GO:0001650">
    <property type="term" value="C:fibrillar center"/>
    <property type="evidence" value="ECO:0000314"/>
    <property type="project" value="HPA"/>
</dbReference>
<dbReference type="GO" id="GO:0005902">
    <property type="term" value="C:microvillus"/>
    <property type="evidence" value="ECO:0007669"/>
    <property type="project" value="Ensembl"/>
</dbReference>
<dbReference type="GO" id="GO:0005654">
    <property type="term" value="C:nucleoplasm"/>
    <property type="evidence" value="ECO:0000314"/>
    <property type="project" value="HPA"/>
</dbReference>
<dbReference type="GO" id="GO:0005634">
    <property type="term" value="C:nucleus"/>
    <property type="evidence" value="ECO:0000314"/>
    <property type="project" value="UniProtKB"/>
</dbReference>
<dbReference type="GO" id="GO:0003682">
    <property type="term" value="F:chromatin binding"/>
    <property type="evidence" value="ECO:0007669"/>
    <property type="project" value="Ensembl"/>
</dbReference>
<dbReference type="GO" id="GO:0003677">
    <property type="term" value="F:DNA binding"/>
    <property type="evidence" value="ECO:0000314"/>
    <property type="project" value="UniProtKB"/>
</dbReference>
<dbReference type="GO" id="GO:0001228">
    <property type="term" value="F:DNA-binding transcription activator activity, RNA polymerase II-specific"/>
    <property type="evidence" value="ECO:0000250"/>
    <property type="project" value="BHF-UCL"/>
</dbReference>
<dbReference type="GO" id="GO:0003700">
    <property type="term" value="F:DNA-binding transcription factor activity"/>
    <property type="evidence" value="ECO:0000304"/>
    <property type="project" value="ProtInc"/>
</dbReference>
<dbReference type="GO" id="GO:0000981">
    <property type="term" value="F:DNA-binding transcription factor activity, RNA polymerase II-specific"/>
    <property type="evidence" value="ECO:0000247"/>
    <property type="project" value="NTNU_SB"/>
</dbReference>
<dbReference type="GO" id="GO:0019904">
    <property type="term" value="F:protein domain specific binding"/>
    <property type="evidence" value="ECO:0007669"/>
    <property type="project" value="InterPro"/>
</dbReference>
<dbReference type="GO" id="GO:0000978">
    <property type="term" value="F:RNA polymerase II cis-regulatory region sequence-specific DNA binding"/>
    <property type="evidence" value="ECO:0000314"/>
    <property type="project" value="BHF-UCL"/>
</dbReference>
<dbReference type="GO" id="GO:1990837">
    <property type="term" value="F:sequence-specific double-stranded DNA binding"/>
    <property type="evidence" value="ECO:0000314"/>
    <property type="project" value="ARUK-UCL"/>
</dbReference>
<dbReference type="GO" id="GO:0000976">
    <property type="term" value="F:transcription cis-regulatory region binding"/>
    <property type="evidence" value="ECO:0000314"/>
    <property type="project" value="UniProtKB"/>
</dbReference>
<dbReference type="GO" id="GO:0061144">
    <property type="term" value="P:alveolar secondary septum development"/>
    <property type="evidence" value="ECO:0007669"/>
    <property type="project" value="Ensembl"/>
</dbReference>
<dbReference type="GO" id="GO:0048646">
    <property type="term" value="P:anatomical structure formation involved in morphogenesis"/>
    <property type="evidence" value="ECO:0007669"/>
    <property type="project" value="Ensembl"/>
</dbReference>
<dbReference type="GO" id="GO:0009653">
    <property type="term" value="P:anatomical structure morphogenesis"/>
    <property type="evidence" value="ECO:0000318"/>
    <property type="project" value="GO_Central"/>
</dbReference>
<dbReference type="GO" id="GO:0030154">
    <property type="term" value="P:cell differentiation"/>
    <property type="evidence" value="ECO:0000318"/>
    <property type="project" value="GO_Central"/>
</dbReference>
<dbReference type="GO" id="GO:0006338">
    <property type="term" value="P:chromatin remodeling"/>
    <property type="evidence" value="ECO:0000250"/>
    <property type="project" value="UniProtKB"/>
</dbReference>
<dbReference type="GO" id="GO:0071542">
    <property type="term" value="P:dopaminergic neuron differentiation"/>
    <property type="evidence" value="ECO:0000304"/>
    <property type="project" value="ParkinsonsUK-UCL"/>
</dbReference>
<dbReference type="GO" id="GO:0021904">
    <property type="term" value="P:dorsal/ventral neural tube patterning"/>
    <property type="evidence" value="ECO:0007669"/>
    <property type="project" value="Ensembl"/>
</dbReference>
<dbReference type="GO" id="GO:0060743">
    <property type="term" value="P:epithelial cell maturation involved in prostate gland development"/>
    <property type="evidence" value="ECO:0007669"/>
    <property type="project" value="Ensembl"/>
</dbReference>
<dbReference type="GO" id="GO:0060441">
    <property type="term" value="P:epithelial tube branching involved in lung morphogenesis"/>
    <property type="evidence" value="ECO:0007669"/>
    <property type="project" value="Ensembl"/>
</dbReference>
<dbReference type="GO" id="GO:0042593">
    <property type="term" value="P:glucose homeostasis"/>
    <property type="evidence" value="ECO:0007669"/>
    <property type="project" value="Ensembl"/>
</dbReference>
<dbReference type="GO" id="GO:0042445">
    <property type="term" value="P:hormone metabolic process"/>
    <property type="evidence" value="ECO:0007669"/>
    <property type="project" value="Ensembl"/>
</dbReference>
<dbReference type="GO" id="GO:0060487">
    <property type="term" value="P:lung epithelial cell differentiation"/>
    <property type="evidence" value="ECO:0007669"/>
    <property type="project" value="Ensembl"/>
</dbReference>
<dbReference type="GO" id="GO:0060739">
    <property type="term" value="P:mesenchymal-epithelial cell signaling involved in prostate gland development"/>
    <property type="evidence" value="ECO:0007669"/>
    <property type="project" value="Ensembl"/>
</dbReference>
<dbReference type="GO" id="GO:0010719">
    <property type="term" value="P:negative regulation of epithelial to mesenchymal transition"/>
    <property type="evidence" value="ECO:0000315"/>
    <property type="project" value="BHF-UCL"/>
</dbReference>
<dbReference type="GO" id="GO:0000122">
    <property type="term" value="P:negative regulation of transcription by RNA polymerase II"/>
    <property type="evidence" value="ECO:0007669"/>
    <property type="project" value="Ensembl"/>
</dbReference>
<dbReference type="GO" id="GO:0048665">
    <property type="term" value="P:neuron fate specification"/>
    <property type="evidence" value="ECO:0007669"/>
    <property type="project" value="Ensembl"/>
</dbReference>
<dbReference type="GO" id="GO:0007219">
    <property type="term" value="P:Notch signaling pathway"/>
    <property type="evidence" value="ECO:0007669"/>
    <property type="project" value="Ensembl"/>
</dbReference>
<dbReference type="GO" id="GO:0043065">
    <property type="term" value="P:positive regulation of apoptotic process"/>
    <property type="evidence" value="ECO:0000314"/>
    <property type="project" value="UniProtKB"/>
</dbReference>
<dbReference type="GO" id="GO:2000049">
    <property type="term" value="P:positive regulation of cell-cell adhesion mediated by cadherin"/>
    <property type="evidence" value="ECO:0000305"/>
    <property type="project" value="BHF-UCL"/>
</dbReference>
<dbReference type="GO" id="GO:0051091">
    <property type="term" value="P:positive regulation of DNA-binding transcription factor activity"/>
    <property type="evidence" value="ECO:0000315"/>
    <property type="project" value="UniProtKB"/>
</dbReference>
<dbReference type="GO" id="GO:1904340">
    <property type="term" value="P:positive regulation of dopaminergic neuron differentiation"/>
    <property type="evidence" value="ECO:0007669"/>
    <property type="project" value="Ensembl"/>
</dbReference>
<dbReference type="GO" id="GO:0033148">
    <property type="term" value="P:positive regulation of intracellular estrogen receptor signaling pathway"/>
    <property type="evidence" value="ECO:0000315"/>
    <property type="project" value="UniProtKB"/>
</dbReference>
<dbReference type="GO" id="GO:1902895">
    <property type="term" value="P:positive regulation of miRNA transcription"/>
    <property type="evidence" value="ECO:0000305"/>
    <property type="project" value="BHF-UCL"/>
</dbReference>
<dbReference type="GO" id="GO:0045931">
    <property type="term" value="P:positive regulation of mitotic cell cycle"/>
    <property type="evidence" value="ECO:0000315"/>
    <property type="project" value="UniProtKB"/>
</dbReference>
<dbReference type="GO" id="GO:0045880">
    <property type="term" value="P:positive regulation of smoothened signaling pathway"/>
    <property type="evidence" value="ECO:0007669"/>
    <property type="project" value="Ensembl"/>
</dbReference>
<dbReference type="GO" id="GO:0045944">
    <property type="term" value="P:positive regulation of transcription by RNA polymerase II"/>
    <property type="evidence" value="ECO:0000314"/>
    <property type="project" value="UniProtKB"/>
</dbReference>
<dbReference type="GO" id="GO:0060740">
    <property type="term" value="P:prostate gland epithelium morphogenesis"/>
    <property type="evidence" value="ECO:0007669"/>
    <property type="project" value="Ensembl"/>
</dbReference>
<dbReference type="GO" id="GO:0060741">
    <property type="term" value="P:prostate gland stromal morphogenesis"/>
    <property type="evidence" value="ECO:0007669"/>
    <property type="project" value="Ensembl"/>
</dbReference>
<dbReference type="GO" id="GO:0006357">
    <property type="term" value="P:regulation of transcription by RNA polymerase II"/>
    <property type="evidence" value="ECO:0000318"/>
    <property type="project" value="GO_Central"/>
</dbReference>
<dbReference type="GO" id="GO:1902691">
    <property type="term" value="P:respiratory basal cell differentiation"/>
    <property type="evidence" value="ECO:0007669"/>
    <property type="project" value="Ensembl"/>
</dbReference>
<dbReference type="GO" id="GO:0032355">
    <property type="term" value="P:response to estradiol"/>
    <property type="evidence" value="ECO:0000314"/>
    <property type="project" value="UniProtKB"/>
</dbReference>
<dbReference type="GO" id="GO:0060528">
    <property type="term" value="P:secretory columnal luminar epithelial cell differentiation involved in prostate glandular acinus development"/>
    <property type="evidence" value="ECO:0007669"/>
    <property type="project" value="Ensembl"/>
</dbReference>
<dbReference type="GO" id="GO:0007224">
    <property type="term" value="P:smoothened signaling pathway"/>
    <property type="evidence" value="ECO:0007669"/>
    <property type="project" value="Ensembl"/>
</dbReference>
<dbReference type="CDD" id="cd20038">
    <property type="entry name" value="FH_FOXA1"/>
    <property type="match status" value="1"/>
</dbReference>
<dbReference type="FunFam" id="1.10.10.10:FF:000042">
    <property type="entry name" value="hepatocyte nuclear factor 3-beta"/>
    <property type="match status" value="1"/>
</dbReference>
<dbReference type="Gene3D" id="1.10.10.10">
    <property type="entry name" value="Winged helix-like DNA-binding domain superfamily/Winged helix DNA-binding domain"/>
    <property type="match status" value="1"/>
</dbReference>
<dbReference type="InterPro" id="IPR013638">
    <property type="entry name" value="Fork-head_N"/>
</dbReference>
<dbReference type="InterPro" id="IPR001766">
    <property type="entry name" value="Fork_head_dom"/>
</dbReference>
<dbReference type="InterPro" id="IPR018533">
    <property type="entry name" value="Forkhead_box_C"/>
</dbReference>
<dbReference type="InterPro" id="IPR050211">
    <property type="entry name" value="FOX_domain-containing"/>
</dbReference>
<dbReference type="InterPro" id="IPR018122">
    <property type="entry name" value="TF_fork_head_CS_1"/>
</dbReference>
<dbReference type="InterPro" id="IPR030456">
    <property type="entry name" value="TF_fork_head_CS_2"/>
</dbReference>
<dbReference type="InterPro" id="IPR036388">
    <property type="entry name" value="WH-like_DNA-bd_sf"/>
</dbReference>
<dbReference type="InterPro" id="IPR036390">
    <property type="entry name" value="WH_DNA-bd_sf"/>
</dbReference>
<dbReference type="PANTHER" id="PTHR11829">
    <property type="entry name" value="FORKHEAD BOX PROTEIN"/>
    <property type="match status" value="1"/>
</dbReference>
<dbReference type="PANTHER" id="PTHR11829:SF195">
    <property type="entry name" value="HEPATOCYTE NUCLEAR FACTOR 3-ALPHA"/>
    <property type="match status" value="1"/>
</dbReference>
<dbReference type="Pfam" id="PF00250">
    <property type="entry name" value="Forkhead"/>
    <property type="match status" value="1"/>
</dbReference>
<dbReference type="Pfam" id="PF08430">
    <property type="entry name" value="Forkhead_N"/>
    <property type="match status" value="1"/>
</dbReference>
<dbReference type="Pfam" id="PF09354">
    <property type="entry name" value="HNF_C"/>
    <property type="match status" value="1"/>
</dbReference>
<dbReference type="PRINTS" id="PR00053">
    <property type="entry name" value="FORKHEAD"/>
</dbReference>
<dbReference type="SMART" id="SM00339">
    <property type="entry name" value="FH"/>
    <property type="match status" value="1"/>
</dbReference>
<dbReference type="SUPFAM" id="SSF46785">
    <property type="entry name" value="Winged helix' DNA-binding domain"/>
    <property type="match status" value="1"/>
</dbReference>
<dbReference type="PROSITE" id="PS00657">
    <property type="entry name" value="FORK_HEAD_1"/>
    <property type="match status" value="1"/>
</dbReference>
<dbReference type="PROSITE" id="PS00658">
    <property type="entry name" value="FORK_HEAD_2"/>
    <property type="match status" value="1"/>
</dbReference>
<dbReference type="PROSITE" id="PS50039">
    <property type="entry name" value="FORK_HEAD_3"/>
    <property type="match status" value="1"/>
</dbReference>
<name>FOXA1_HUMAN</name>
<keyword id="KW-0002">3D-structure</keyword>
<keyword id="KW-0010">Activator</keyword>
<keyword id="KW-0025">Alternative splicing</keyword>
<keyword id="KW-0156">Chromatin regulator</keyword>
<keyword id="KW-0217">Developmental protein</keyword>
<keyword id="KW-0238">DNA-binding</keyword>
<keyword id="KW-0539">Nucleus</keyword>
<keyword id="KW-0597">Phosphoprotein</keyword>
<keyword id="KW-1267">Proteomics identification</keyword>
<keyword id="KW-1185">Reference proteome</keyword>
<keyword id="KW-0678">Repressor</keyword>
<keyword id="KW-0804">Transcription</keyword>
<keyword id="KW-0805">Transcription regulation</keyword>
<protein>
    <recommendedName>
        <fullName>Hepatocyte nuclear factor 3-alpha</fullName>
        <shortName>HNF-3-alpha</shortName>
        <shortName>HNF-3A</shortName>
    </recommendedName>
    <alternativeName>
        <fullName>Forkhead box protein A1</fullName>
    </alternativeName>
    <alternativeName>
        <fullName>Transcription factor 3A</fullName>
        <shortName>TCF-3A</shortName>
    </alternativeName>
</protein>
<organism>
    <name type="scientific">Homo sapiens</name>
    <name type="common">Human</name>
    <dbReference type="NCBI Taxonomy" id="9606"/>
    <lineage>
        <taxon>Eukaryota</taxon>
        <taxon>Metazoa</taxon>
        <taxon>Chordata</taxon>
        <taxon>Craniata</taxon>
        <taxon>Vertebrata</taxon>
        <taxon>Euteleostomi</taxon>
        <taxon>Mammalia</taxon>
        <taxon>Eutheria</taxon>
        <taxon>Euarchontoglires</taxon>
        <taxon>Primates</taxon>
        <taxon>Haplorrhini</taxon>
        <taxon>Catarrhini</taxon>
        <taxon>Hominidae</taxon>
        <taxon>Homo</taxon>
    </lineage>
</organism>
<feature type="chain" id="PRO_0000091792" description="Hepatocyte nuclear factor 3-alpha">
    <location>
        <begin position="1"/>
        <end position="472"/>
    </location>
</feature>
<feature type="DNA-binding region" description="Fork-head" evidence="2">
    <location>
        <begin position="169"/>
        <end position="260"/>
    </location>
</feature>
<feature type="region of interest" description="Disordered" evidence="3">
    <location>
        <begin position="269"/>
        <end position="392"/>
    </location>
</feature>
<feature type="compositionally biased region" description="Gly residues" evidence="3">
    <location>
        <begin position="273"/>
        <end position="289"/>
    </location>
</feature>
<feature type="compositionally biased region" description="Low complexity" evidence="3">
    <location>
        <begin position="322"/>
        <end position="332"/>
    </location>
</feature>
<feature type="compositionally biased region" description="Low complexity" evidence="3">
    <location>
        <begin position="351"/>
        <end position="366"/>
    </location>
</feature>
<feature type="modified residue" description="Phosphoserine" evidence="14 15">
    <location>
        <position position="307"/>
    </location>
</feature>
<feature type="modified residue" description="Phosphoserine" evidence="15">
    <location>
        <position position="331"/>
    </location>
</feature>
<feature type="splice variant" id="VSP_055094" description="In isoform 2." evidence="13">
    <location>
        <begin position="1"/>
        <end position="33"/>
    </location>
</feature>
<feature type="sequence variant" id="VAR_015183" evidence="4 12">
    <original>G</original>
    <variation>A</variation>
    <location>
        <position position="72"/>
    </location>
</feature>
<feature type="sequence variant" id="VAR_013457" description="In dbSNP:rs7144658." evidence="4">
    <original>A</original>
    <variation>T</variation>
    <location>
        <position position="83"/>
    </location>
</feature>
<feature type="sequence variant" id="VAR_055835" description="In dbSNP:rs35220193.">
    <original>G</original>
    <variation>E</variation>
    <location>
        <position position="87"/>
    </location>
</feature>
<feature type="sequence variant" id="VAR_015184" evidence="4 12">
    <original>M</original>
    <variation>MM</variation>
    <location>
        <position position="124"/>
    </location>
</feature>
<feature type="sequence variant" id="VAR_015185" evidence="4 12">
    <original>Q</original>
    <variation>R</variation>
    <location>
        <position position="185"/>
    </location>
</feature>
<feature type="sequence variant" id="VAR_013458" description="In dbSNP:rs33984772." evidence="4">
    <original>S</original>
    <variation>N</variation>
    <location>
        <position position="448"/>
    </location>
</feature>
<feature type="helix" evidence="16">
    <location>
        <begin position="175"/>
        <end position="184"/>
    </location>
</feature>
<feature type="helix" evidence="16">
    <location>
        <begin position="193"/>
        <end position="203"/>
    </location>
</feature>
<feature type="helix" evidence="16">
    <location>
        <begin position="205"/>
        <end position="208"/>
    </location>
</feature>
<feature type="helix" evidence="16">
    <location>
        <begin position="211"/>
        <end position="224"/>
    </location>
</feature>
<feature type="strand" evidence="16">
    <location>
        <begin position="228"/>
        <end position="231"/>
    </location>
</feature>
<feature type="strand" evidence="16">
    <location>
        <begin position="243"/>
        <end position="246"/>
    </location>
</feature>
<feature type="helix" evidence="16">
    <location>
        <begin position="248"/>
        <end position="250"/>
    </location>
</feature>
<feature type="turn" evidence="18">
    <location>
        <begin position="255"/>
        <end position="257"/>
    </location>
</feature>
<feature type="strand" evidence="17">
    <location>
        <begin position="259"/>
        <end position="261"/>
    </location>
</feature>
<proteinExistence type="evidence at protein level"/>
<comment type="function">
    <text evidence="1 7 8 9 10 11">Transcription factor that is involved in embryonic development, establishment of tissue-specific gene expression and regulation of gene expression in differentiated tissues. Is thought to act as a 'pioneer' factor opening the compacted chromatin for other proteins through interactions with nucleosomal core histones and thereby replacing linker histones at target enhancer and/or promoter sites. Binds DNA with the consensus sequence 5'-[AC]A[AT]T[AG]TT[GT][AG][CT]T[CT]-3' (By similarity). Proposed to play a role in translating the epigenetic signatures into cell type-specific enhancer-driven transcriptional programs. Its differential recruitment to chromatin is dependent on distribution of histone H3 methylated at 'Lys-5' (H3K4me2) in estrogen-regulated genes. Involved in the development of multiple endoderm-derived organ systems such as liver, pancreas, lung and prostate; FOXA1 and FOXA2 seem to have at least in part redundant roles (By similarity). Modulates the transcriptional activity of nuclear hormone receptors. Is involved in ESR1-mediated transcription; required for ESR1 binding to the NKX2-1 promoter in breast cancer cells; binds to the RPRM promoter and is required for the estrogen-induced repression of RPRM. Involved in regulation of apoptosis by inhibiting the expression of BCL2. Involved in cell cycle regulation by activating expression of CDKN1B, alone or in conjunction with BRCA1. Originally described as a transcription activator for a number of liver genes such as AFP, albumin, tyrosine aminotransferase, PEPCK, etc. Interacts with the cis-acting regulatory regions of these genes. Involved in glucose homeostasis.</text>
</comment>
<comment type="subunit">
    <text evidence="1">Binds DNA as a monomer (By similarity). Interacts with FOXA2. Interacts with NKX2-1. Interacts with HDAC7. Interacts with the histone H3-H4 heterodimer. Associates with nucleosomes containing histone H2A. Interacts with AR. Interacts with NR0B2 (By similarity).</text>
</comment>
<comment type="interaction">
    <interactant intactId="EBI-3918034">
        <id>P55317</id>
    </interactant>
    <interactant intactId="EBI-608057">
        <id>P10275</id>
        <label>AR</label>
    </interactant>
    <organismsDiffer>false</organismsDiffer>
    <experiments>4</experiments>
</comment>
<comment type="subcellular location">
    <subcellularLocation>
        <location evidence="2 6 8">Nucleus</location>
    </subcellularLocation>
</comment>
<comment type="alternative products">
    <event type="alternative splicing"/>
    <isoform>
        <id>P55317-1</id>
        <name>1</name>
        <sequence type="displayed"/>
    </isoform>
    <isoform>
        <id>P55317-2</id>
        <name>2</name>
        <sequence type="described" ref="VSP_055094"/>
    </isoform>
</comment>
<comment type="tissue specificity">
    <text evidence="5 6 8">Highly expressed in prostate and ESR1-positive breast tumors. Overexpressed in esophageal and lung adenocarcinomas.</text>
</comment>
<comment type="online information" name="Wikipedia">
    <link uri="https://en.wikipedia.org/wiki/Hepatocyte_nuclear_factors"/>
    <text>Hepatocyte nuclear factors entry</text>
</comment>
<comment type="online information" name="Atlas of Genetics and Cytogenetics in Oncology and Haematology">
    <link uri="https://atlasgeneticsoncology.org/gene/44403/FOXA1"/>
</comment>
<evidence type="ECO:0000250" key="1"/>
<evidence type="ECO:0000255" key="2">
    <source>
        <dbReference type="PROSITE-ProRule" id="PRU00089"/>
    </source>
</evidence>
<evidence type="ECO:0000256" key="3">
    <source>
        <dbReference type="SAM" id="MobiDB-lite"/>
    </source>
</evidence>
<evidence type="ECO:0000269" key="4">
    <source>
    </source>
</evidence>
<evidence type="ECO:0000269" key="5">
    <source>
    </source>
</evidence>
<evidence type="ECO:0000269" key="6">
    <source>
    </source>
</evidence>
<evidence type="ECO:0000269" key="7">
    <source>
    </source>
</evidence>
<evidence type="ECO:0000269" key="8">
    <source>
    </source>
</evidence>
<evidence type="ECO:0000269" key="9">
    <source>
    </source>
</evidence>
<evidence type="ECO:0000269" key="10">
    <source>
    </source>
</evidence>
<evidence type="ECO:0000269" key="11">
    <source>
    </source>
</evidence>
<evidence type="ECO:0000269" key="12">
    <source>
    </source>
</evidence>
<evidence type="ECO:0000303" key="13">
    <source>
    </source>
</evidence>
<evidence type="ECO:0007744" key="14">
    <source>
    </source>
</evidence>
<evidence type="ECO:0007744" key="15">
    <source>
    </source>
</evidence>
<evidence type="ECO:0007829" key="16">
    <source>
        <dbReference type="PDB" id="7VOX"/>
    </source>
</evidence>
<evidence type="ECO:0007829" key="17">
    <source>
        <dbReference type="PDB" id="8VFY"/>
    </source>
</evidence>
<evidence type="ECO:0007829" key="18">
    <source>
        <dbReference type="PDB" id="8VG1"/>
    </source>
</evidence>
<sequence length="472" mass="49148">MLGTVKMEGHETSDWNSYYADTQEAYSSVPVSNMNSGLGSMNSMNTYMTMNTMTTSGNMTPASFNMSYANPGLGAGLSPGAVAGMPGGSAGAMNSMTAAGVTAMGTALSPSGMGAMGAQQAASMNGLGPYAAAMNPCMSPMAYAPSNLGRSRAGGGGDAKTFKRSYPHAKPPYSYISLITMAIQQAPSKMLTLSEIYQWIMDLFPYYRQNQQRWQNSIRHSLSFNDCFVKVARSPDKPGKGSYWTLHPDSGNMFENGCYLRRQKRFKCEKQPGAGGGGGSGSGGSGAKGGPESRKDPSGASNPSADSPLHRGVHGKTGQLEGAPAPGPAASPQTLDHSGATATGGASELKTPASSTAPPISSGPGALASVPASHPAHGLAPHESQLHLKGDPHYSFNHPFSINNLMSSSEQQHKLDFKAYEQALQYSPYGSTLPASLPLGSASVTTRSPIEPSALEPAYYQGVYSRPVLNTS</sequence>
<reference key="1">
    <citation type="journal article" date="1996" name="Biochim. Biophys. Acta">
        <title>Molecular cloning of the forkhead transcription factor HNF-3 alpha from a human pulmonary adenocarcinoma cell line.</title>
        <authorList>
            <person name="Bingle C.D."/>
            <person name="Gowan S."/>
        </authorList>
    </citation>
    <scope>NUCLEOTIDE SEQUENCE [MRNA] (ISOFORM 1)</scope>
    <scope>VARIANTS ALA-72; MET-124 INS AND ARG-185</scope>
    <source>
        <tissue>Lung</tissue>
    </source>
</reference>
<reference key="2">
    <citation type="journal article" date="2000" name="Hum. Hered.">
        <title>The human HNF-3 genes: cloning, partial sequence and mutation screening in patients with impaired glucose homeostasis.</title>
        <authorList>
            <person name="Navas M.A."/>
            <person name="Vaisse C."/>
            <person name="Boger S."/>
            <person name="Heimesaat M."/>
            <person name="Kollee L.A."/>
            <person name="Stoffel M."/>
        </authorList>
    </citation>
    <scope>NUCLEOTIDE SEQUENCE [GENOMIC DNA]</scope>
    <scope>VARIANTS ALA-72; THR-83; MET-124 INS; ARG-185 AND ASN-448</scope>
</reference>
<reference key="3">
    <citation type="submission" date="2000-09" db="EMBL/GenBank/DDBJ databases">
        <title>Genetic variation in the HNF-3alpha gene.</title>
        <authorList>
            <person name="Yu L."/>
            <person name="Takeda J."/>
        </authorList>
    </citation>
    <scope>NUCLEOTIDE SEQUENCE [GENOMIC DNA]</scope>
</reference>
<reference key="4">
    <citation type="journal article" date="2004" name="Nat. Genet.">
        <title>Complete sequencing and characterization of 21,243 full-length human cDNAs.</title>
        <authorList>
            <person name="Ota T."/>
            <person name="Suzuki Y."/>
            <person name="Nishikawa T."/>
            <person name="Otsuki T."/>
            <person name="Sugiyama T."/>
            <person name="Irie R."/>
            <person name="Wakamatsu A."/>
            <person name="Hayashi K."/>
            <person name="Sato H."/>
            <person name="Nagai K."/>
            <person name="Kimura K."/>
            <person name="Makita H."/>
            <person name="Sekine M."/>
            <person name="Obayashi M."/>
            <person name="Nishi T."/>
            <person name="Shibahara T."/>
            <person name="Tanaka T."/>
            <person name="Ishii S."/>
            <person name="Yamamoto J."/>
            <person name="Saito K."/>
            <person name="Kawai Y."/>
            <person name="Isono Y."/>
            <person name="Nakamura Y."/>
            <person name="Nagahari K."/>
            <person name="Murakami K."/>
            <person name="Yasuda T."/>
            <person name="Iwayanagi T."/>
            <person name="Wagatsuma M."/>
            <person name="Shiratori A."/>
            <person name="Sudo H."/>
            <person name="Hosoiri T."/>
            <person name="Kaku Y."/>
            <person name="Kodaira H."/>
            <person name="Kondo H."/>
            <person name="Sugawara M."/>
            <person name="Takahashi M."/>
            <person name="Kanda K."/>
            <person name="Yokoi T."/>
            <person name="Furuya T."/>
            <person name="Kikkawa E."/>
            <person name="Omura Y."/>
            <person name="Abe K."/>
            <person name="Kamihara K."/>
            <person name="Katsuta N."/>
            <person name="Sato K."/>
            <person name="Tanikawa M."/>
            <person name="Yamazaki M."/>
            <person name="Ninomiya K."/>
            <person name="Ishibashi T."/>
            <person name="Yamashita H."/>
            <person name="Murakawa K."/>
            <person name="Fujimori K."/>
            <person name="Tanai H."/>
            <person name="Kimata M."/>
            <person name="Watanabe M."/>
            <person name="Hiraoka S."/>
            <person name="Chiba Y."/>
            <person name="Ishida S."/>
            <person name="Ono Y."/>
            <person name="Takiguchi S."/>
            <person name="Watanabe S."/>
            <person name="Yosida M."/>
            <person name="Hotuta T."/>
            <person name="Kusano J."/>
            <person name="Kanehori K."/>
            <person name="Takahashi-Fujii A."/>
            <person name="Hara H."/>
            <person name="Tanase T.-O."/>
            <person name="Nomura Y."/>
            <person name="Togiya S."/>
            <person name="Komai F."/>
            <person name="Hara R."/>
            <person name="Takeuchi K."/>
            <person name="Arita M."/>
            <person name="Imose N."/>
            <person name="Musashino K."/>
            <person name="Yuuki H."/>
            <person name="Oshima A."/>
            <person name="Sasaki N."/>
            <person name="Aotsuka S."/>
            <person name="Yoshikawa Y."/>
            <person name="Matsunawa H."/>
            <person name="Ichihara T."/>
            <person name="Shiohata N."/>
            <person name="Sano S."/>
            <person name="Moriya S."/>
            <person name="Momiyama H."/>
            <person name="Satoh N."/>
            <person name="Takami S."/>
            <person name="Terashima Y."/>
            <person name="Suzuki O."/>
            <person name="Nakagawa S."/>
            <person name="Senoh A."/>
            <person name="Mizoguchi H."/>
            <person name="Goto Y."/>
            <person name="Shimizu F."/>
            <person name="Wakebe H."/>
            <person name="Hishigaki H."/>
            <person name="Watanabe T."/>
            <person name="Sugiyama A."/>
            <person name="Takemoto M."/>
            <person name="Kawakami B."/>
            <person name="Yamazaki M."/>
            <person name="Watanabe K."/>
            <person name="Kumagai A."/>
            <person name="Itakura S."/>
            <person name="Fukuzumi Y."/>
            <person name="Fujimori Y."/>
            <person name="Komiyama M."/>
            <person name="Tashiro H."/>
            <person name="Tanigami A."/>
            <person name="Fujiwara T."/>
            <person name="Ono T."/>
            <person name="Yamada K."/>
            <person name="Fujii Y."/>
            <person name="Ozaki K."/>
            <person name="Hirao M."/>
            <person name="Ohmori Y."/>
            <person name="Kawabata A."/>
            <person name="Hikiji T."/>
            <person name="Kobatake N."/>
            <person name="Inagaki H."/>
            <person name="Ikema Y."/>
            <person name="Okamoto S."/>
            <person name="Okitani R."/>
            <person name="Kawakami T."/>
            <person name="Noguchi S."/>
            <person name="Itoh T."/>
            <person name="Shigeta K."/>
            <person name="Senba T."/>
            <person name="Matsumura K."/>
            <person name="Nakajima Y."/>
            <person name="Mizuno T."/>
            <person name="Morinaga M."/>
            <person name="Sasaki M."/>
            <person name="Togashi T."/>
            <person name="Oyama M."/>
            <person name="Hata H."/>
            <person name="Watanabe M."/>
            <person name="Komatsu T."/>
            <person name="Mizushima-Sugano J."/>
            <person name="Satoh T."/>
            <person name="Shirai Y."/>
            <person name="Takahashi Y."/>
            <person name="Nakagawa K."/>
            <person name="Okumura K."/>
            <person name="Nagase T."/>
            <person name="Nomura N."/>
            <person name="Kikuchi H."/>
            <person name="Masuho Y."/>
            <person name="Yamashita R."/>
            <person name="Nakai K."/>
            <person name="Yada T."/>
            <person name="Nakamura Y."/>
            <person name="Ohara O."/>
            <person name="Isogai T."/>
            <person name="Sugano S."/>
        </authorList>
    </citation>
    <scope>NUCLEOTIDE SEQUENCE [LARGE SCALE MRNA] (ISOFORMS 1 AND 2)</scope>
    <source>
        <tissue>Mammary gland</tissue>
        <tissue>Trachea</tissue>
    </source>
</reference>
<reference key="5">
    <citation type="journal article" date="2003" name="Nature">
        <title>The DNA sequence and analysis of human chromosome 14.</title>
        <authorList>
            <person name="Heilig R."/>
            <person name="Eckenberg R."/>
            <person name="Petit J.-L."/>
            <person name="Fonknechten N."/>
            <person name="Da Silva C."/>
            <person name="Cattolico L."/>
            <person name="Levy M."/>
            <person name="Barbe V."/>
            <person name="De Berardinis V."/>
            <person name="Ureta-Vidal A."/>
            <person name="Pelletier E."/>
            <person name="Vico V."/>
            <person name="Anthouard V."/>
            <person name="Rowen L."/>
            <person name="Madan A."/>
            <person name="Qin S."/>
            <person name="Sun H."/>
            <person name="Du H."/>
            <person name="Pepin K."/>
            <person name="Artiguenave F."/>
            <person name="Robert C."/>
            <person name="Cruaud C."/>
            <person name="Bruels T."/>
            <person name="Jaillon O."/>
            <person name="Friedlander L."/>
            <person name="Samson G."/>
            <person name="Brottier P."/>
            <person name="Cure S."/>
            <person name="Segurens B."/>
            <person name="Aniere F."/>
            <person name="Samain S."/>
            <person name="Crespeau H."/>
            <person name="Abbasi N."/>
            <person name="Aiach N."/>
            <person name="Boscus D."/>
            <person name="Dickhoff R."/>
            <person name="Dors M."/>
            <person name="Dubois I."/>
            <person name="Friedman C."/>
            <person name="Gouyvenoux M."/>
            <person name="James R."/>
            <person name="Madan A."/>
            <person name="Mairey-Estrada B."/>
            <person name="Mangenot S."/>
            <person name="Martins N."/>
            <person name="Menard M."/>
            <person name="Oztas S."/>
            <person name="Ratcliffe A."/>
            <person name="Shaffer T."/>
            <person name="Trask B."/>
            <person name="Vacherie B."/>
            <person name="Bellemere C."/>
            <person name="Belser C."/>
            <person name="Besnard-Gonnet M."/>
            <person name="Bartol-Mavel D."/>
            <person name="Boutard M."/>
            <person name="Briez-Silla S."/>
            <person name="Combette S."/>
            <person name="Dufosse-Laurent V."/>
            <person name="Ferron C."/>
            <person name="Lechaplais C."/>
            <person name="Louesse C."/>
            <person name="Muselet D."/>
            <person name="Magdelenat G."/>
            <person name="Pateau E."/>
            <person name="Petit E."/>
            <person name="Sirvain-Trukniewicz P."/>
            <person name="Trybou A."/>
            <person name="Vega-Czarny N."/>
            <person name="Bataille E."/>
            <person name="Bluet E."/>
            <person name="Bordelais I."/>
            <person name="Dubois M."/>
            <person name="Dumont C."/>
            <person name="Guerin T."/>
            <person name="Haffray S."/>
            <person name="Hammadi R."/>
            <person name="Muanga J."/>
            <person name="Pellouin V."/>
            <person name="Robert D."/>
            <person name="Wunderle E."/>
            <person name="Gauguet G."/>
            <person name="Roy A."/>
            <person name="Sainte-Marthe L."/>
            <person name="Verdier J."/>
            <person name="Verdier-Discala C."/>
            <person name="Hillier L.W."/>
            <person name="Fulton L."/>
            <person name="McPherson J."/>
            <person name="Matsuda F."/>
            <person name="Wilson R."/>
            <person name="Scarpelli C."/>
            <person name="Gyapay G."/>
            <person name="Wincker P."/>
            <person name="Saurin W."/>
            <person name="Quetier F."/>
            <person name="Waterston R."/>
            <person name="Hood L."/>
            <person name="Weissenbach J."/>
        </authorList>
    </citation>
    <scope>NUCLEOTIDE SEQUENCE [LARGE SCALE GENOMIC DNA]</scope>
</reference>
<reference key="6">
    <citation type="submission" date="2005-09" db="EMBL/GenBank/DDBJ databases">
        <authorList>
            <person name="Mural R.J."/>
            <person name="Istrail S."/>
            <person name="Sutton G.G."/>
            <person name="Florea L."/>
            <person name="Halpern A.L."/>
            <person name="Mobarry C.M."/>
            <person name="Lippert R."/>
            <person name="Walenz B."/>
            <person name="Shatkay H."/>
            <person name="Dew I."/>
            <person name="Miller J.R."/>
            <person name="Flanigan M.J."/>
            <person name="Edwards N.J."/>
            <person name="Bolanos R."/>
            <person name="Fasulo D."/>
            <person name="Halldorsson B.V."/>
            <person name="Hannenhalli S."/>
            <person name="Turner R."/>
            <person name="Yooseph S."/>
            <person name="Lu F."/>
            <person name="Nusskern D.R."/>
            <person name="Shue B.C."/>
            <person name="Zheng X.H."/>
            <person name="Zhong F."/>
            <person name="Delcher A.L."/>
            <person name="Huson D.H."/>
            <person name="Kravitz S.A."/>
            <person name="Mouchard L."/>
            <person name="Reinert K."/>
            <person name="Remington K.A."/>
            <person name="Clark A.G."/>
            <person name="Waterman M.S."/>
            <person name="Eichler E.E."/>
            <person name="Adams M.D."/>
            <person name="Hunkapiller M.W."/>
            <person name="Myers E.W."/>
            <person name="Venter J.C."/>
        </authorList>
    </citation>
    <scope>NUCLEOTIDE SEQUENCE [LARGE SCALE GENOMIC DNA]</scope>
</reference>
<reference key="7">
    <citation type="journal article" date="2004" name="Genome Res.">
        <title>The status, quality, and expansion of the NIH full-length cDNA project: the Mammalian Gene Collection (MGC).</title>
        <authorList>
            <consortium name="The MGC Project Team"/>
        </authorList>
    </citation>
    <scope>NUCLEOTIDE SEQUENCE [LARGE SCALE MRNA] (ISOFORM 1)</scope>
    <source>
        <tissue>Testis</tissue>
    </source>
</reference>
<reference key="8">
    <citation type="journal article" date="2002" name="Cancer Res.">
        <title>The hepatocyte nuclear factor 3 alpha gene, HNF3alpha (FOXA1), on chromosome band 14q13 is amplified and overexpressed in esophageal and lung adenocarcinomas.</title>
        <authorList>
            <person name="Lin L."/>
            <person name="Miller C.T."/>
            <person name="Contreras J.I."/>
            <person name="Prescott M.S."/>
            <person name="Dagenais S.L."/>
            <person name="Wu R."/>
            <person name="Yee J."/>
            <person name="Orringer M.B."/>
            <person name="Misek D.E."/>
            <person name="Hanash S.M."/>
            <person name="Glover T.W."/>
            <person name="Beer D.G."/>
        </authorList>
    </citation>
    <scope>TISSUE SPECIFICITY</scope>
</reference>
<reference key="9">
    <citation type="journal article" date="2005" name="Development">
        <title>Forkhead box A1 regulates prostate ductal morphogenesis and promotes epithelial cell maturation.</title>
        <authorList>
            <person name="Gao N."/>
            <person name="Ishii K."/>
            <person name="Mirosevich J."/>
            <person name="Kuwajima S."/>
            <person name="Oppenheimer S.R."/>
            <person name="Roberts R.L."/>
            <person name="Jiang M."/>
            <person name="Yu X."/>
            <person name="Shappell S.B."/>
            <person name="Caprioli R.M."/>
            <person name="Stoffel M."/>
            <person name="Hayward S.W."/>
            <person name="Matusik R.J."/>
        </authorList>
    </citation>
    <scope>TISSUE SPECIFICITY</scope>
    <scope>SUBCELLULAR LOCATION</scope>
</reference>
<reference key="10">
    <citation type="journal article" date="2005" name="Proc. Natl. Acad. Sci. U.S.A.">
        <title>Location analysis of estrogen receptor alpha target promoters reveals that FOXA1 defines a domain of the estrogen response.</title>
        <authorList>
            <person name="Laganiere J."/>
            <person name="Deblois G."/>
            <person name="Lefebvre C."/>
            <person name="Bataille A.R."/>
            <person name="Robert F."/>
            <person name="Giguere V."/>
        </authorList>
    </citation>
    <scope>FUNCTION</scope>
</reference>
<reference key="11">
    <citation type="journal article" date="2006" name="Oncogene">
        <title>BRCA1 and FOXA1 proteins coregulate the expression of the cell cycle-dependent kinase inhibitor p27(Kip1).</title>
        <authorList>
            <person name="Williamson E.A."/>
            <person name="Wolf I."/>
            <person name="O'Kelly J."/>
            <person name="Bose S."/>
            <person name="Tanosaki S."/>
            <person name="Koeffler H.P."/>
        </authorList>
    </citation>
    <scope>FUNCTION IN CELL CYCLE REGULATION</scope>
    <scope>SUBCELLULAR LOCATION</scope>
    <scope>TISSUE SPECIFICITY</scope>
</reference>
<reference key="12">
    <citation type="journal article" date="2007" name="Mol. Cell. Biol.">
        <title>Physical and functional interactions between homeodomain NKX2.1 and winged helix/forkhead FOXA1 in lung epithelial cells.</title>
        <authorList>
            <person name="Minoo P."/>
            <person name="Hu L."/>
            <person name="Xing Y."/>
            <person name="Zhu N.L."/>
            <person name="Chen H."/>
            <person name="Li M."/>
            <person name="Borok Z."/>
            <person name="Li C."/>
        </authorList>
    </citation>
    <scope>INTERACTION WITH NKX2-1</scope>
</reference>
<reference key="13">
    <citation type="journal article" date="2008" name="Cell">
        <title>FoxA1 translates epigenetic signatures into enhancer-driven lineage-specific transcription.</title>
        <authorList>
            <person name="Lupien M."/>
            <person name="Eeckhoute J."/>
            <person name="Meyer C.A."/>
            <person name="Wang Q."/>
            <person name="Zhang Y."/>
            <person name="Li W."/>
            <person name="Carroll J.S."/>
            <person name="Liu X.S."/>
            <person name="Brown M."/>
        </authorList>
    </citation>
    <scope>FUNCTION IN CELL TYPE-SPECIFIC TRANSCRIPTION</scope>
    <scope>DIFFERENTIAL RECRUITMENT TO CHROMATIN</scope>
</reference>
<reference key="14">
    <citation type="journal article" date="2009" name="Cell Stress Chaperones">
        <title>Role of Foxa1 in regulation of bcl2 expression during oxidative-stress-induced apoptosis in A549 type II pneumocytes.</title>
        <authorList>
            <person name="Song L."/>
            <person name="Wei X."/>
            <person name="Zhang B."/>
            <person name="Luo X."/>
            <person name="Liu J."/>
            <person name="Feng Y."/>
            <person name="Xiao X."/>
        </authorList>
    </citation>
    <scope>FUNCTION IN REGULATION OF APOPTOSIS</scope>
</reference>
<reference key="15">
    <citation type="journal article" date="2009" name="Genome Biol.">
        <title>Differential binding and co-binding pattern of FOXA1 and FOXA3 and their relation to H3K4me3 in HepG2 cells revealed by ChIP-seq.</title>
        <authorList>
            <person name="Motallebipour M."/>
            <person name="Ameur A."/>
            <person name="Reddy Bysani M.S."/>
            <person name="Patra K."/>
            <person name="Wallerman O."/>
            <person name="Mangion J."/>
            <person name="Barker M.A."/>
            <person name="McKernan K.J."/>
            <person name="Komorowski J."/>
            <person name="Wadelius C."/>
        </authorList>
    </citation>
    <scope>INTERACTION WITH FOXA2</scope>
</reference>
<reference key="16">
    <citation type="journal article" date="2010" name="Mol. Cell. Biol.">
        <title>Histone deacetylase 7 and FoxA1 in estrogen-mediated repression of RPRM.</title>
        <authorList>
            <person name="Malik S."/>
            <person name="Jiang S."/>
            <person name="Garee J.P."/>
            <person name="Verdin E."/>
            <person name="Lee A.V."/>
            <person name="O'Malley B.W."/>
            <person name="Zhang M."/>
            <person name="Belaguli N.S."/>
            <person name="Oesterreich S."/>
        </authorList>
    </citation>
    <scope>FUNCTION IN ESR1-MEDIATED TRANSCRIPTION REPRESSION</scope>
    <scope>DIFFERENTIAL RECRUITMENT TO CHROMATIN</scope>
    <scope>INTERACTION WITH HDAC7</scope>
</reference>
<reference key="17">
    <citation type="journal article" date="2010" name="Sci. Signal.">
        <title>Quantitative phosphoproteomics reveals widespread full phosphorylation site occupancy during mitosis.</title>
        <authorList>
            <person name="Olsen J.V."/>
            <person name="Vermeulen M."/>
            <person name="Santamaria A."/>
            <person name="Kumar C."/>
            <person name="Miller M.L."/>
            <person name="Jensen L.J."/>
            <person name="Gnad F."/>
            <person name="Cox J."/>
            <person name="Jensen T.S."/>
            <person name="Nigg E.A."/>
            <person name="Brunak S."/>
            <person name="Mann M."/>
        </authorList>
    </citation>
    <scope>IDENTIFICATION BY MASS SPECTROMETRY [LARGE SCALE ANALYSIS]</scope>
    <source>
        <tissue>Cervix carcinoma</tissue>
    </source>
</reference>
<reference key="18">
    <citation type="journal article" date="2013" name="J. Proteome Res.">
        <title>Toward a comprehensive characterization of a human cancer cell phosphoproteome.</title>
        <authorList>
            <person name="Zhou H."/>
            <person name="Di Palma S."/>
            <person name="Preisinger C."/>
            <person name="Peng M."/>
            <person name="Polat A.N."/>
            <person name="Heck A.J."/>
            <person name="Mohammed S."/>
        </authorList>
    </citation>
    <scope>PHOSPHORYLATION [LARGE SCALE ANALYSIS] AT SER-307</scope>
    <scope>IDENTIFICATION BY MASS SPECTROMETRY [LARGE SCALE ANALYSIS]</scope>
    <source>
        <tissue>Cervix carcinoma</tissue>
        <tissue>Erythroleukemia</tissue>
    </source>
</reference>
<reference key="19">
    <citation type="journal article" date="2014" name="J. Proteomics">
        <title>An enzyme assisted RP-RPLC approach for in-depth analysis of human liver phosphoproteome.</title>
        <authorList>
            <person name="Bian Y."/>
            <person name="Song C."/>
            <person name="Cheng K."/>
            <person name="Dong M."/>
            <person name="Wang F."/>
            <person name="Huang J."/>
            <person name="Sun D."/>
            <person name="Wang L."/>
            <person name="Ye M."/>
            <person name="Zou H."/>
        </authorList>
    </citation>
    <scope>PHOSPHORYLATION [LARGE SCALE ANALYSIS] AT SER-307 AND SER-331</scope>
    <scope>IDENTIFICATION BY MASS SPECTROMETRY [LARGE SCALE ANALYSIS]</scope>
    <source>
        <tissue>Liver</tissue>
    </source>
</reference>
<accession>P55317</accession>
<accession>B2R9H6</accession>
<accession>B7ZAP5</accession>
<accession>Q9H2A0</accession>
<gene>
    <name type="primary">FOXA1</name>
    <name type="synonym">HNF3A</name>
    <name type="synonym">TCF3A</name>
</gene>